<dbReference type="EC" id="3.1.-.-" evidence="1"/>
<dbReference type="EMBL" id="CP000024">
    <property type="protein sequence ID" value="AAV63472.1"/>
    <property type="molecule type" value="Genomic_DNA"/>
</dbReference>
<dbReference type="SMR" id="Q5LXP0"/>
<dbReference type="KEGG" id="stc:str1960"/>
<dbReference type="HOGENOM" id="CLU_098240_2_0_9"/>
<dbReference type="GO" id="GO:0005829">
    <property type="term" value="C:cytosol"/>
    <property type="evidence" value="ECO:0007669"/>
    <property type="project" value="TreeGrafter"/>
</dbReference>
<dbReference type="GO" id="GO:0004518">
    <property type="term" value="F:nuclease activity"/>
    <property type="evidence" value="ECO:0007669"/>
    <property type="project" value="UniProtKB-KW"/>
</dbReference>
<dbReference type="GO" id="GO:0000967">
    <property type="term" value="P:rRNA 5'-end processing"/>
    <property type="evidence" value="ECO:0007669"/>
    <property type="project" value="UniProtKB-UniRule"/>
</dbReference>
<dbReference type="CDD" id="cd16964">
    <property type="entry name" value="YqgF"/>
    <property type="match status" value="1"/>
</dbReference>
<dbReference type="FunFam" id="3.30.420.140:FF:000003">
    <property type="entry name" value="Putative pre-16S rRNA nuclease"/>
    <property type="match status" value="1"/>
</dbReference>
<dbReference type="Gene3D" id="3.30.420.140">
    <property type="entry name" value="YqgF/RNase H-like domain"/>
    <property type="match status" value="1"/>
</dbReference>
<dbReference type="HAMAP" id="MF_00651">
    <property type="entry name" value="Nuclease_YqgF"/>
    <property type="match status" value="1"/>
</dbReference>
<dbReference type="InterPro" id="IPR012337">
    <property type="entry name" value="RNaseH-like_sf"/>
</dbReference>
<dbReference type="InterPro" id="IPR005227">
    <property type="entry name" value="YqgF"/>
</dbReference>
<dbReference type="InterPro" id="IPR006641">
    <property type="entry name" value="YqgF/RNaseH-like_dom"/>
</dbReference>
<dbReference type="InterPro" id="IPR037027">
    <property type="entry name" value="YqgF/RNaseH-like_dom_sf"/>
</dbReference>
<dbReference type="NCBIfam" id="TIGR00250">
    <property type="entry name" value="RNAse_H_YqgF"/>
    <property type="match status" value="1"/>
</dbReference>
<dbReference type="PANTHER" id="PTHR33317">
    <property type="entry name" value="POLYNUCLEOTIDYL TRANSFERASE, RIBONUCLEASE H-LIKE SUPERFAMILY PROTEIN"/>
    <property type="match status" value="1"/>
</dbReference>
<dbReference type="PANTHER" id="PTHR33317:SF4">
    <property type="entry name" value="POLYNUCLEOTIDYL TRANSFERASE, RIBONUCLEASE H-LIKE SUPERFAMILY PROTEIN"/>
    <property type="match status" value="1"/>
</dbReference>
<dbReference type="Pfam" id="PF03652">
    <property type="entry name" value="RuvX"/>
    <property type="match status" value="1"/>
</dbReference>
<dbReference type="SMART" id="SM00732">
    <property type="entry name" value="YqgFc"/>
    <property type="match status" value="1"/>
</dbReference>
<dbReference type="SUPFAM" id="SSF53098">
    <property type="entry name" value="Ribonuclease H-like"/>
    <property type="match status" value="1"/>
</dbReference>
<comment type="function">
    <text evidence="1">Could be a nuclease involved in processing of the 5'-end of pre-16S rRNA.</text>
</comment>
<comment type="subcellular location">
    <subcellularLocation>
        <location evidence="1">Cytoplasm</location>
    </subcellularLocation>
</comment>
<comment type="similarity">
    <text evidence="1">Belongs to the YqgF nuclease family.</text>
</comment>
<keyword id="KW-0963">Cytoplasm</keyword>
<keyword id="KW-0378">Hydrolase</keyword>
<keyword id="KW-0540">Nuclease</keyword>
<keyword id="KW-0690">Ribosome biogenesis</keyword>
<sequence length="139" mass="15667">MRVMGLDVGSKTVGVAISDPLGFTAQGVEIIKINEEAKEFGFDRLGELVKEYQVDKFVVGLPKNMNNTEGPRVEASKAYGDKIKEIFNLPVDYQDERLTTVQAERMLVEQADVSRGKRKKVIDKLAAQLILQNYLDRMF</sequence>
<gene>
    <name type="ordered locus">str1960</name>
</gene>
<feature type="chain" id="PRO_0000172155" description="Putative pre-16S rRNA nuclease">
    <location>
        <begin position="1"/>
        <end position="139"/>
    </location>
</feature>
<organism>
    <name type="scientific">Streptococcus thermophilus (strain CNRZ 1066)</name>
    <dbReference type="NCBI Taxonomy" id="299768"/>
    <lineage>
        <taxon>Bacteria</taxon>
        <taxon>Bacillati</taxon>
        <taxon>Bacillota</taxon>
        <taxon>Bacilli</taxon>
        <taxon>Lactobacillales</taxon>
        <taxon>Streptococcaceae</taxon>
        <taxon>Streptococcus</taxon>
    </lineage>
</organism>
<name>YQGF_STRT1</name>
<evidence type="ECO:0000255" key="1">
    <source>
        <dbReference type="HAMAP-Rule" id="MF_00651"/>
    </source>
</evidence>
<accession>Q5LXP0</accession>
<proteinExistence type="inferred from homology"/>
<protein>
    <recommendedName>
        <fullName evidence="1">Putative pre-16S rRNA nuclease</fullName>
        <ecNumber evidence="1">3.1.-.-</ecNumber>
    </recommendedName>
</protein>
<reference key="1">
    <citation type="journal article" date="2004" name="Nat. Biotechnol.">
        <title>Complete sequence and comparative genome analysis of the dairy bacterium Streptococcus thermophilus.</title>
        <authorList>
            <person name="Bolotin A."/>
            <person name="Quinquis B."/>
            <person name="Renault P."/>
            <person name="Sorokin A."/>
            <person name="Ehrlich S.D."/>
            <person name="Kulakauskas S."/>
            <person name="Lapidus A."/>
            <person name="Goltsman E."/>
            <person name="Mazur M."/>
            <person name="Pusch G.D."/>
            <person name="Fonstein M."/>
            <person name="Overbeek R."/>
            <person name="Kyprides N."/>
            <person name="Purnelle B."/>
            <person name="Prozzi D."/>
            <person name="Ngui K."/>
            <person name="Masuy D."/>
            <person name="Hancy F."/>
            <person name="Burteau S."/>
            <person name="Boutry M."/>
            <person name="Delcour J."/>
            <person name="Goffeau A."/>
            <person name="Hols P."/>
        </authorList>
    </citation>
    <scope>NUCLEOTIDE SEQUENCE [LARGE SCALE GENOMIC DNA]</scope>
    <source>
        <strain>CNRZ 1066</strain>
    </source>
</reference>